<dbReference type="EMBL" id="AAFI02000005">
    <property type="protein sequence ID" value="EAL72549.1"/>
    <property type="molecule type" value="Genomic_DNA"/>
</dbReference>
<dbReference type="RefSeq" id="XP_646764.1">
    <property type="nucleotide sequence ID" value="XM_641672.1"/>
</dbReference>
<dbReference type="SMR" id="Q55BR7"/>
<dbReference type="FunCoup" id="Q55BR7">
    <property type="interactions" value="438"/>
</dbReference>
<dbReference type="STRING" id="44689.Q55BR7"/>
<dbReference type="PaxDb" id="44689-DDB0234064"/>
<dbReference type="EnsemblProtists" id="EAL72549">
    <property type="protein sequence ID" value="EAL72549"/>
    <property type="gene ID" value="DDB_G0270398"/>
</dbReference>
<dbReference type="GeneID" id="8617737"/>
<dbReference type="KEGG" id="ddi:DDB_G0270398"/>
<dbReference type="dictyBase" id="DDB_G0270398">
    <property type="gene designation" value="raptor"/>
</dbReference>
<dbReference type="VEuPathDB" id="AmoebaDB:DDB_G0270398"/>
<dbReference type="eggNOG" id="KOG1517">
    <property type="taxonomic scope" value="Eukaryota"/>
</dbReference>
<dbReference type="HOGENOM" id="CLU_001136_3_1_1"/>
<dbReference type="InParanoid" id="Q55BR7"/>
<dbReference type="OMA" id="TEVCTND"/>
<dbReference type="PhylomeDB" id="Q55BR7"/>
<dbReference type="Reactome" id="R-DDI-1632852">
    <property type="pathway name" value="Macroautophagy"/>
</dbReference>
<dbReference type="Reactome" id="R-DDI-165159">
    <property type="pathway name" value="MTOR signalling"/>
</dbReference>
<dbReference type="Reactome" id="R-DDI-166208">
    <property type="pathway name" value="mTORC1-mediated signalling"/>
</dbReference>
<dbReference type="Reactome" id="R-DDI-3371571">
    <property type="pathway name" value="HSF1-dependent transactivation"/>
</dbReference>
<dbReference type="Reactome" id="R-DDI-380972">
    <property type="pathway name" value="Energy dependent regulation of mTOR by LKB1-AMPK"/>
</dbReference>
<dbReference type="Reactome" id="R-DDI-5628897">
    <property type="pathway name" value="TP53 Regulates Metabolic Genes"/>
</dbReference>
<dbReference type="Reactome" id="R-DDI-8943724">
    <property type="pathway name" value="Regulation of PTEN gene transcription"/>
</dbReference>
<dbReference type="Reactome" id="R-DDI-9639288">
    <property type="pathway name" value="Amino acids regulate mTORC1"/>
</dbReference>
<dbReference type="PRO" id="PR:Q55BR7"/>
<dbReference type="Proteomes" id="UP000002195">
    <property type="component" value="Chromosome 1"/>
</dbReference>
<dbReference type="GO" id="GO:0005776">
    <property type="term" value="C:autophagosome"/>
    <property type="evidence" value="ECO:0000314"/>
    <property type="project" value="dictyBase"/>
</dbReference>
<dbReference type="GO" id="GO:0005737">
    <property type="term" value="C:cytoplasm"/>
    <property type="evidence" value="ECO:0000318"/>
    <property type="project" value="GO_Central"/>
</dbReference>
<dbReference type="GO" id="GO:0031931">
    <property type="term" value="C:TORC1 complex"/>
    <property type="evidence" value="ECO:0000318"/>
    <property type="project" value="GO_Central"/>
</dbReference>
<dbReference type="GO" id="GO:0030674">
    <property type="term" value="F:protein-macromolecule adaptor activity"/>
    <property type="evidence" value="ECO:0000318"/>
    <property type="project" value="GO_Central"/>
</dbReference>
<dbReference type="GO" id="GO:0071230">
    <property type="term" value="P:cellular response to amino acid stimulus"/>
    <property type="evidence" value="ECO:0000318"/>
    <property type="project" value="GO_Central"/>
</dbReference>
<dbReference type="GO" id="GO:0009267">
    <property type="term" value="P:cellular response to starvation"/>
    <property type="evidence" value="ECO:0000318"/>
    <property type="project" value="GO_Central"/>
</dbReference>
<dbReference type="GO" id="GO:1903666">
    <property type="term" value="P:positive regulation of asexual reproduction"/>
    <property type="evidence" value="ECO:0000315"/>
    <property type="project" value="dictyBase"/>
</dbReference>
<dbReference type="GO" id="GO:0030307">
    <property type="term" value="P:positive regulation of cell growth"/>
    <property type="evidence" value="ECO:0000318"/>
    <property type="project" value="GO_Central"/>
</dbReference>
<dbReference type="GO" id="GO:0010506">
    <property type="term" value="P:regulation of autophagy"/>
    <property type="evidence" value="ECO:0000318"/>
    <property type="project" value="GO_Central"/>
</dbReference>
<dbReference type="GO" id="GO:0031929">
    <property type="term" value="P:TOR signaling"/>
    <property type="evidence" value="ECO:0000318"/>
    <property type="project" value="GO_Central"/>
</dbReference>
<dbReference type="FunFam" id="1.25.10.10:FF:001490">
    <property type="entry name" value="Protein raptor homolog"/>
    <property type="match status" value="1"/>
</dbReference>
<dbReference type="FunFam" id="2.130.10.10:FF:003647">
    <property type="entry name" value="Protein raptor homolog"/>
    <property type="match status" value="1"/>
</dbReference>
<dbReference type="Gene3D" id="1.25.10.10">
    <property type="entry name" value="Leucine-rich Repeat Variant"/>
    <property type="match status" value="1"/>
</dbReference>
<dbReference type="Gene3D" id="2.130.10.10">
    <property type="entry name" value="YVTN repeat-like/Quinoprotein amine dehydrogenase"/>
    <property type="match status" value="2"/>
</dbReference>
<dbReference type="InterPro" id="IPR011989">
    <property type="entry name" value="ARM-like"/>
</dbReference>
<dbReference type="InterPro" id="IPR016024">
    <property type="entry name" value="ARM-type_fold"/>
</dbReference>
<dbReference type="InterPro" id="IPR000357">
    <property type="entry name" value="HEAT"/>
</dbReference>
<dbReference type="InterPro" id="IPR004083">
    <property type="entry name" value="Raptor"/>
</dbReference>
<dbReference type="InterPro" id="IPR029347">
    <property type="entry name" value="Raptor_N"/>
</dbReference>
<dbReference type="InterPro" id="IPR015943">
    <property type="entry name" value="WD40/YVTN_repeat-like_dom_sf"/>
</dbReference>
<dbReference type="InterPro" id="IPR036322">
    <property type="entry name" value="WD40_repeat_dom_sf"/>
</dbReference>
<dbReference type="InterPro" id="IPR001680">
    <property type="entry name" value="WD40_rpt"/>
</dbReference>
<dbReference type="PANTHER" id="PTHR12848">
    <property type="entry name" value="REGULATORY-ASSOCIATED PROTEIN OF MTOR"/>
    <property type="match status" value="1"/>
</dbReference>
<dbReference type="PANTHER" id="PTHR12848:SF16">
    <property type="entry name" value="REGULATORY-ASSOCIATED PROTEIN OF MTOR"/>
    <property type="match status" value="1"/>
</dbReference>
<dbReference type="Pfam" id="PF02985">
    <property type="entry name" value="HEAT"/>
    <property type="match status" value="1"/>
</dbReference>
<dbReference type="Pfam" id="PF14538">
    <property type="entry name" value="Raptor_N"/>
    <property type="match status" value="1"/>
</dbReference>
<dbReference type="Pfam" id="PF00400">
    <property type="entry name" value="WD40"/>
    <property type="match status" value="2"/>
</dbReference>
<dbReference type="PRINTS" id="PR01547">
    <property type="entry name" value="YEAST176DUF"/>
</dbReference>
<dbReference type="SMART" id="SM01302">
    <property type="entry name" value="Raptor_N"/>
    <property type="match status" value="1"/>
</dbReference>
<dbReference type="SMART" id="SM00320">
    <property type="entry name" value="WD40"/>
    <property type="match status" value="6"/>
</dbReference>
<dbReference type="SUPFAM" id="SSF48371">
    <property type="entry name" value="ARM repeat"/>
    <property type="match status" value="1"/>
</dbReference>
<dbReference type="SUPFAM" id="SSF50978">
    <property type="entry name" value="WD40 repeat-like"/>
    <property type="match status" value="1"/>
</dbReference>
<dbReference type="PROSITE" id="PS50294">
    <property type="entry name" value="WD_REPEATS_REGION"/>
    <property type="match status" value="1"/>
</dbReference>
<name>RPTOR_DICDI</name>
<accession>Q55BR7</accession>
<feature type="chain" id="PRO_0000368234" description="Protein raptor homolog">
    <location>
        <begin position="1"/>
        <end position="1509"/>
    </location>
</feature>
<feature type="repeat" description="WD 1">
    <location>
        <begin position="1184"/>
        <end position="1225"/>
    </location>
</feature>
<feature type="repeat" description="WD 2">
    <location>
        <begin position="1229"/>
        <end position="1270"/>
    </location>
</feature>
<feature type="repeat" description="WD 3">
    <location>
        <begin position="1284"/>
        <end position="1328"/>
    </location>
</feature>
<feature type="repeat" description="WD 4">
    <location>
        <begin position="1332"/>
        <end position="1371"/>
    </location>
</feature>
<feature type="repeat" description="WD 5">
    <location>
        <begin position="1377"/>
        <end position="1418"/>
    </location>
</feature>
<feature type="repeat" description="WD 6">
    <location>
        <begin position="1420"/>
        <end position="1460"/>
    </location>
</feature>
<feature type="repeat" description="WD 7">
    <location>
        <begin position="1468"/>
        <end position="1507"/>
    </location>
</feature>
<feature type="region of interest" description="Disordered" evidence="1">
    <location>
        <begin position="1"/>
        <end position="100"/>
    </location>
</feature>
<feature type="region of interest" description="Disordered" evidence="1">
    <location>
        <begin position="281"/>
        <end position="356"/>
    </location>
</feature>
<feature type="region of interest" description="Disordered" evidence="1">
    <location>
        <begin position="970"/>
        <end position="1005"/>
    </location>
</feature>
<feature type="region of interest" description="Disordered" evidence="1">
    <location>
        <begin position="1018"/>
        <end position="1058"/>
    </location>
</feature>
<feature type="region of interest" description="Disordered" evidence="1">
    <location>
        <begin position="1072"/>
        <end position="1091"/>
    </location>
</feature>
<feature type="compositionally biased region" description="Polar residues" evidence="1">
    <location>
        <begin position="1"/>
        <end position="19"/>
    </location>
</feature>
<feature type="compositionally biased region" description="Low complexity" evidence="1">
    <location>
        <begin position="20"/>
        <end position="67"/>
    </location>
</feature>
<feature type="compositionally biased region" description="Basic and acidic residues" evidence="1">
    <location>
        <begin position="89"/>
        <end position="98"/>
    </location>
</feature>
<feature type="compositionally biased region" description="Low complexity" evidence="1">
    <location>
        <begin position="282"/>
        <end position="356"/>
    </location>
</feature>
<feature type="compositionally biased region" description="Polar residues" evidence="1">
    <location>
        <begin position="982"/>
        <end position="1004"/>
    </location>
</feature>
<feature type="compositionally biased region" description="Low complexity" evidence="1">
    <location>
        <begin position="1082"/>
        <end position="1091"/>
    </location>
</feature>
<keyword id="KW-1185">Reference proteome</keyword>
<keyword id="KW-0677">Repeat</keyword>
<keyword id="KW-0853">WD repeat</keyword>
<organism>
    <name type="scientific">Dictyostelium discoideum</name>
    <name type="common">Social amoeba</name>
    <dbReference type="NCBI Taxonomy" id="44689"/>
    <lineage>
        <taxon>Eukaryota</taxon>
        <taxon>Amoebozoa</taxon>
        <taxon>Evosea</taxon>
        <taxon>Eumycetozoa</taxon>
        <taxon>Dictyostelia</taxon>
        <taxon>Dictyosteliales</taxon>
        <taxon>Dictyosteliaceae</taxon>
        <taxon>Dictyostelium</taxon>
    </lineage>
</organism>
<proteinExistence type="evidence at protein level"/>
<sequence length="1509" mass="167888">MDKSYNFSSSNLANSSGLHNSINSNNVNGVNNINNNNNNNNNNNNNNNNNNNNENVNNHNNVSNISNTHQQAKKKEKYNNNNNKNKPFFGEERHKDNATPDVQKTKIAKWRMRERMKTVSVALVLCLNIGVDPPDVIKTFPCARMECWFDPSTQPPQKALDLIGKTLQAQYEKWQSKARYKQSLDPTVEEVKKLCLSLRRNAKDERVLFHYNGHGVPKPTTNGEIWVFNRNFTQYIPLSIYELQTWMGTPSIYVFDCSAAGLIINWFNQFAEQRDKELERFSGNNQNNNQNNNQNSNQNNQNNTTNSTNGNTNGNNQQNNNNSNNNSSNNSNTNSPNMGSSNSVNNNQSGSSSSSSHQRDCILLAACSANEILPMNPDFPADMFTACLTTPIRIALRWFCSHSILTGITADMLDKIPGNLSSRRTPLGELNWIFTAVTDTIAWNVLPRHLFQKLFRQDLLVASLFRNYLLAERIMRSANCTPISCPRLPPTYQHAMWQAWDLAVDLVISQLPTLLADPNAEFKSSPFFTEQLTAFEVWLEFGSEHKDPPAQLPIVLQVLLSQAHRLRALVLLGKFLDLGPWAVNLALCVGIFPYVLKLLQSPAGDLRHILVFIWAKILALDKSCQLDLVKENGHAYFISVLSSPQIPADQRTMSAFVLSTICNNCRPGQNACLIGNLLPICLSQLNDPDPMVRRWMILCMAKMWENFEEAKWAAIKENAHEKLCLLLTDVSPEVRASAVVALGELIGGAEGSEQRTNIELNLALTLAVITADCSPMVRKELVISLSRIVSSYESNFVQVAQEIAQEERLRAVLEAKRLEESRKSKKRASVPKISDADHLNNNSDLYGNGSQSSVYGCLWKIILNLCTDPFDQVANRAQSIVKRISSKFSMEELMSHNLINRTNFNFNNLNGSMNGLNSSGSGFLNSSNGNLGASMNGSNLNSSNNNLGGSSGGGFGLNNSNSSIRNTFVNISRITNRDPRSPTKTKLGNQRSPILTSSTNNVGTNLNGNQLNLNNNNINNGNINNNNNNNSSINNNGNNINNNGNGNNNNINNNNGLGNQLANTFQSLSLSSGLGGNKTNKMSQSISSMNSSSQSLQNDFLMVSDSMPFEEDELYSDYYEWSCNYFSKPMMQSTGEDFESFESIEKKWKRQRNEMIIQESKEAVQNIIQQPPKSFSQMTIFAEPNGQPISHLQFHPFDNILVVSDGLENISVWNYDDGQRINTFNNCNMSGTRITSMKLVNDYDPSMIITAADDGVVRIWRGYESNDTLKMVSSWRAFPEFATTGNDPIGRLVLDWKGDSGLVLVSGETPDSPKIRIWDVERELGVQDIFIGTESVVTCMANEKRGPLFSAGFSDGLVKLFDQRIPGKYSCVSTLTEHKSYIVNVSMPASLGGKTVVSGSSTGEIKFWQHSYECSSTTIHNNDVISSFSVHEYAPLIACGSQNQRIKIMNFTGEDVCTIRYHDGFLGQRIGPVSCVAFHPYNILMGAGATDSIISIYNGDSKSKSNVDW</sequence>
<evidence type="ECO:0000256" key="1">
    <source>
        <dbReference type="SAM" id="MobiDB-lite"/>
    </source>
</evidence>
<evidence type="ECO:0000269" key="2">
    <source>
    </source>
</evidence>
<evidence type="ECO:0000305" key="3"/>
<reference key="1">
    <citation type="journal article" date="2005" name="Nature">
        <title>The genome of the social amoeba Dictyostelium discoideum.</title>
        <authorList>
            <person name="Eichinger L."/>
            <person name="Pachebat J.A."/>
            <person name="Gloeckner G."/>
            <person name="Rajandream M.A."/>
            <person name="Sucgang R."/>
            <person name="Berriman M."/>
            <person name="Song J."/>
            <person name="Olsen R."/>
            <person name="Szafranski K."/>
            <person name="Xu Q."/>
            <person name="Tunggal B."/>
            <person name="Kummerfeld S."/>
            <person name="Madera M."/>
            <person name="Konfortov B.A."/>
            <person name="Rivero F."/>
            <person name="Bankier A.T."/>
            <person name="Lehmann R."/>
            <person name="Hamlin N."/>
            <person name="Davies R."/>
            <person name="Gaudet P."/>
            <person name="Fey P."/>
            <person name="Pilcher K."/>
            <person name="Chen G."/>
            <person name="Saunders D."/>
            <person name="Sodergren E.J."/>
            <person name="Davis P."/>
            <person name="Kerhornou A."/>
            <person name="Nie X."/>
            <person name="Hall N."/>
            <person name="Anjard C."/>
            <person name="Hemphill L."/>
            <person name="Bason N."/>
            <person name="Farbrother P."/>
            <person name="Desany B."/>
            <person name="Just E."/>
            <person name="Morio T."/>
            <person name="Rost R."/>
            <person name="Churcher C.M."/>
            <person name="Cooper J."/>
            <person name="Haydock S."/>
            <person name="van Driessche N."/>
            <person name="Cronin A."/>
            <person name="Goodhead I."/>
            <person name="Muzny D.M."/>
            <person name="Mourier T."/>
            <person name="Pain A."/>
            <person name="Lu M."/>
            <person name="Harper D."/>
            <person name="Lindsay R."/>
            <person name="Hauser H."/>
            <person name="James K.D."/>
            <person name="Quiles M."/>
            <person name="Madan Babu M."/>
            <person name="Saito T."/>
            <person name="Buchrieser C."/>
            <person name="Wardroper A."/>
            <person name="Felder M."/>
            <person name="Thangavelu M."/>
            <person name="Johnson D."/>
            <person name="Knights A."/>
            <person name="Loulseged H."/>
            <person name="Mungall K.L."/>
            <person name="Oliver K."/>
            <person name="Price C."/>
            <person name="Quail M.A."/>
            <person name="Urushihara H."/>
            <person name="Hernandez J."/>
            <person name="Rabbinowitsch E."/>
            <person name="Steffen D."/>
            <person name="Sanders M."/>
            <person name="Ma J."/>
            <person name="Kohara Y."/>
            <person name="Sharp S."/>
            <person name="Simmonds M.N."/>
            <person name="Spiegler S."/>
            <person name="Tivey A."/>
            <person name="Sugano S."/>
            <person name="White B."/>
            <person name="Walker D."/>
            <person name="Woodward J.R."/>
            <person name="Winckler T."/>
            <person name="Tanaka Y."/>
            <person name="Shaulsky G."/>
            <person name="Schleicher M."/>
            <person name="Weinstock G.M."/>
            <person name="Rosenthal A."/>
            <person name="Cox E.C."/>
            <person name="Chisholm R.L."/>
            <person name="Gibbs R.A."/>
            <person name="Loomis W.F."/>
            <person name="Platzer M."/>
            <person name="Kay R.R."/>
            <person name="Williams J.G."/>
            <person name="Dear P.H."/>
            <person name="Noegel A.A."/>
            <person name="Barrell B.G."/>
            <person name="Kuspa A."/>
        </authorList>
    </citation>
    <scope>NUCLEOTIDE SEQUENCE [LARGE SCALE GENOMIC DNA]</scope>
    <source>
        <strain>AX4</strain>
    </source>
</reference>
<reference key="2">
    <citation type="journal article" date="2005" name="Mol. Biol. Cell">
        <title>TOR complex 2 integrates cell movement during chemotaxis and signal relay in Dictyostelium.</title>
        <authorList>
            <person name="Lee S."/>
            <person name="Comer F.I."/>
            <person name="Sasaki A."/>
            <person name="McLeod I.X."/>
            <person name="Duong Y."/>
            <person name="Okumura K."/>
            <person name="Yates J.R. III"/>
            <person name="Parent C.A."/>
            <person name="Firtel R.A."/>
        </authorList>
    </citation>
    <scope>IDENTIFICATION IN A TORC1 COMPLEX</scope>
</reference>
<gene>
    <name type="primary">raptor</name>
    <name type="ORF">DDB_G0270398</name>
</gene>
<protein>
    <recommendedName>
        <fullName>Protein raptor homolog</fullName>
    </recommendedName>
</protein>
<comment type="subunit">
    <text evidence="2">Part of a complex, TORC1, consisting of tor, raptor and lst8.</text>
</comment>
<comment type="similarity">
    <text evidence="3">Belongs to the WD repeat RAPTOR family.</text>
</comment>